<dbReference type="EC" id="2.7.7.60" evidence="1"/>
<dbReference type="EMBL" id="CP001219">
    <property type="protein sequence ID" value="ACK80882.1"/>
    <property type="molecule type" value="Genomic_DNA"/>
</dbReference>
<dbReference type="RefSeq" id="WP_012536113.1">
    <property type="nucleotide sequence ID" value="NC_011761.1"/>
</dbReference>
<dbReference type="SMR" id="B7J4C0"/>
<dbReference type="STRING" id="243159.AFE_0370"/>
<dbReference type="PaxDb" id="243159-AFE_0370"/>
<dbReference type="GeneID" id="65279747"/>
<dbReference type="KEGG" id="afr:AFE_0370"/>
<dbReference type="eggNOG" id="COG1211">
    <property type="taxonomic scope" value="Bacteria"/>
</dbReference>
<dbReference type="HOGENOM" id="CLU_061281_3_0_6"/>
<dbReference type="UniPathway" id="UPA00056">
    <property type="reaction ID" value="UER00093"/>
</dbReference>
<dbReference type="Proteomes" id="UP000001362">
    <property type="component" value="Chromosome"/>
</dbReference>
<dbReference type="GO" id="GO:0050518">
    <property type="term" value="F:2-C-methyl-D-erythritol 4-phosphate cytidylyltransferase activity"/>
    <property type="evidence" value="ECO:0007669"/>
    <property type="project" value="UniProtKB-UniRule"/>
</dbReference>
<dbReference type="GO" id="GO:0019288">
    <property type="term" value="P:isopentenyl diphosphate biosynthetic process, methylerythritol 4-phosphate pathway"/>
    <property type="evidence" value="ECO:0007669"/>
    <property type="project" value="UniProtKB-UniRule"/>
</dbReference>
<dbReference type="CDD" id="cd02516">
    <property type="entry name" value="CDP-ME_synthetase"/>
    <property type="match status" value="1"/>
</dbReference>
<dbReference type="FunFam" id="3.90.550.10:FF:000003">
    <property type="entry name" value="2-C-methyl-D-erythritol 4-phosphate cytidylyltransferase"/>
    <property type="match status" value="1"/>
</dbReference>
<dbReference type="Gene3D" id="3.90.550.10">
    <property type="entry name" value="Spore Coat Polysaccharide Biosynthesis Protein SpsA, Chain A"/>
    <property type="match status" value="1"/>
</dbReference>
<dbReference type="HAMAP" id="MF_00108">
    <property type="entry name" value="IspD"/>
    <property type="match status" value="1"/>
</dbReference>
<dbReference type="InterPro" id="IPR001228">
    <property type="entry name" value="IspD"/>
</dbReference>
<dbReference type="InterPro" id="IPR034683">
    <property type="entry name" value="IspD/TarI"/>
</dbReference>
<dbReference type="InterPro" id="IPR050088">
    <property type="entry name" value="IspD/TarI_cytidylyltransf_bact"/>
</dbReference>
<dbReference type="InterPro" id="IPR018294">
    <property type="entry name" value="ISPD_synthase_CS"/>
</dbReference>
<dbReference type="InterPro" id="IPR029044">
    <property type="entry name" value="Nucleotide-diphossugar_trans"/>
</dbReference>
<dbReference type="NCBIfam" id="TIGR00453">
    <property type="entry name" value="ispD"/>
    <property type="match status" value="1"/>
</dbReference>
<dbReference type="PANTHER" id="PTHR32125">
    <property type="entry name" value="2-C-METHYL-D-ERYTHRITOL 4-PHOSPHATE CYTIDYLYLTRANSFERASE, CHLOROPLASTIC"/>
    <property type="match status" value="1"/>
</dbReference>
<dbReference type="PANTHER" id="PTHR32125:SF4">
    <property type="entry name" value="2-C-METHYL-D-ERYTHRITOL 4-PHOSPHATE CYTIDYLYLTRANSFERASE, CHLOROPLASTIC"/>
    <property type="match status" value="1"/>
</dbReference>
<dbReference type="Pfam" id="PF01128">
    <property type="entry name" value="IspD"/>
    <property type="match status" value="1"/>
</dbReference>
<dbReference type="SUPFAM" id="SSF53448">
    <property type="entry name" value="Nucleotide-diphospho-sugar transferases"/>
    <property type="match status" value="1"/>
</dbReference>
<dbReference type="PROSITE" id="PS01295">
    <property type="entry name" value="ISPD"/>
    <property type="match status" value="1"/>
</dbReference>
<keyword id="KW-0414">Isoprene biosynthesis</keyword>
<keyword id="KW-0548">Nucleotidyltransferase</keyword>
<keyword id="KW-1185">Reference proteome</keyword>
<keyword id="KW-0808">Transferase</keyword>
<reference key="1">
    <citation type="journal article" date="2008" name="BMC Genomics">
        <title>Acidithiobacillus ferrooxidans metabolism: from genome sequence to industrial applications.</title>
        <authorList>
            <person name="Valdes J."/>
            <person name="Pedroso I."/>
            <person name="Quatrini R."/>
            <person name="Dodson R.J."/>
            <person name="Tettelin H."/>
            <person name="Blake R. II"/>
            <person name="Eisen J.A."/>
            <person name="Holmes D.S."/>
        </authorList>
    </citation>
    <scope>NUCLEOTIDE SEQUENCE [LARGE SCALE GENOMIC DNA]</scope>
    <source>
        <strain>ATCC 23270 / DSM 14882 / CIP 104768 / NCIMB 8455</strain>
    </source>
</reference>
<protein>
    <recommendedName>
        <fullName evidence="1">2-C-methyl-D-erythritol 4-phosphate cytidylyltransferase</fullName>
        <ecNumber evidence="1">2.7.7.60</ecNumber>
    </recommendedName>
    <alternativeName>
        <fullName evidence="1">4-diphosphocytidyl-2C-methyl-D-erythritol synthase</fullName>
    </alternativeName>
    <alternativeName>
        <fullName evidence="1">MEP cytidylyltransferase</fullName>
        <shortName evidence="1">MCT</shortName>
    </alternativeName>
</protein>
<organism>
    <name type="scientific">Acidithiobacillus ferrooxidans (strain ATCC 23270 / DSM 14882 / CIP 104768 / NCIMB 8455)</name>
    <name type="common">Ferrobacillus ferrooxidans (strain ATCC 23270)</name>
    <dbReference type="NCBI Taxonomy" id="243159"/>
    <lineage>
        <taxon>Bacteria</taxon>
        <taxon>Pseudomonadati</taxon>
        <taxon>Pseudomonadota</taxon>
        <taxon>Acidithiobacillia</taxon>
        <taxon>Acidithiobacillales</taxon>
        <taxon>Acidithiobacillaceae</taxon>
        <taxon>Acidithiobacillus</taxon>
    </lineage>
</organism>
<feature type="chain" id="PRO_1000117435" description="2-C-methyl-D-erythritol 4-phosphate cytidylyltransferase">
    <location>
        <begin position="1"/>
        <end position="237"/>
    </location>
</feature>
<feature type="site" description="Transition state stabilizer" evidence="1">
    <location>
        <position position="16"/>
    </location>
</feature>
<feature type="site" description="Transition state stabilizer" evidence="1">
    <location>
        <position position="23"/>
    </location>
</feature>
<feature type="site" description="Positions MEP for the nucleophilic attack" evidence="1">
    <location>
        <position position="160"/>
    </location>
</feature>
<feature type="site" description="Positions MEP for the nucleophilic attack" evidence="1">
    <location>
        <position position="216"/>
    </location>
</feature>
<gene>
    <name evidence="1" type="primary">ispD</name>
    <name type="ordered locus">AFE_0370</name>
</gene>
<comment type="function">
    <text evidence="1">Catalyzes the formation of 4-diphosphocytidyl-2-C-methyl-D-erythritol from CTP and 2-C-methyl-D-erythritol 4-phosphate (MEP).</text>
</comment>
<comment type="catalytic activity">
    <reaction evidence="1">
        <text>2-C-methyl-D-erythritol 4-phosphate + CTP + H(+) = 4-CDP-2-C-methyl-D-erythritol + diphosphate</text>
        <dbReference type="Rhea" id="RHEA:13429"/>
        <dbReference type="ChEBI" id="CHEBI:15378"/>
        <dbReference type="ChEBI" id="CHEBI:33019"/>
        <dbReference type="ChEBI" id="CHEBI:37563"/>
        <dbReference type="ChEBI" id="CHEBI:57823"/>
        <dbReference type="ChEBI" id="CHEBI:58262"/>
        <dbReference type="EC" id="2.7.7.60"/>
    </reaction>
</comment>
<comment type="pathway">
    <text evidence="1">Isoprenoid biosynthesis; isopentenyl diphosphate biosynthesis via DXP pathway; isopentenyl diphosphate from 1-deoxy-D-xylulose 5-phosphate: step 2/6.</text>
</comment>
<comment type="similarity">
    <text evidence="1">Belongs to the IspD/TarI cytidylyltransferase family. IspD subfamily.</text>
</comment>
<proteinExistence type="inferred from homology"/>
<name>ISPD_ACIF2</name>
<sequence>MERVWVVIPAGGRGQRFGAAQAKQYVLLRDRPVIAHTLAAFLGEPRIAGIQLVLPGEDIATGAWRELLGPMPAPLLPPVVGGGLRADSVRLGLEALLRQGAVPSDWVLVHDAARPCLRREDLLRLLESLANAPQGALLAVPVADTLKRGEDGCSSGTVDREGLWRALTPQAFPLGALLAALEAARAGNRQITDEASAMEAQGWRPRLIPGHGDNIKVTLSDDLMLAAAILAARSEEG</sequence>
<evidence type="ECO:0000255" key="1">
    <source>
        <dbReference type="HAMAP-Rule" id="MF_00108"/>
    </source>
</evidence>
<accession>B7J4C0</accession>